<gene>
    <name evidence="1" type="primary">araG2</name>
    <name type="ordered locus">Bamb_4920</name>
</gene>
<accession>Q0B5V4</accession>
<name>ARAG2_BURCM</name>
<reference key="1">
    <citation type="submission" date="2006-08" db="EMBL/GenBank/DDBJ databases">
        <title>Complete sequence of chromosome 2 of Burkholderia cepacia AMMD.</title>
        <authorList>
            <person name="Copeland A."/>
            <person name="Lucas S."/>
            <person name="Lapidus A."/>
            <person name="Barry K."/>
            <person name="Detter J.C."/>
            <person name="Glavina del Rio T."/>
            <person name="Hammon N."/>
            <person name="Israni S."/>
            <person name="Pitluck S."/>
            <person name="Bruce D."/>
            <person name="Chain P."/>
            <person name="Malfatti S."/>
            <person name="Shin M."/>
            <person name="Vergez L."/>
            <person name="Schmutz J."/>
            <person name="Larimer F."/>
            <person name="Land M."/>
            <person name="Hauser L."/>
            <person name="Kyrpides N."/>
            <person name="Kim E."/>
            <person name="Parke J."/>
            <person name="Coenye T."/>
            <person name="Konstantinidis K."/>
            <person name="Ramette A."/>
            <person name="Tiedje J."/>
            <person name="Richardson P."/>
        </authorList>
    </citation>
    <scope>NUCLEOTIDE SEQUENCE [LARGE SCALE GENOMIC DNA]</scope>
    <source>
        <strain>ATCC BAA-244 / DSM 16087 / CCUG 44356 / LMG 19182 / AMMD</strain>
    </source>
</reference>
<dbReference type="EC" id="7.5.2.12" evidence="1"/>
<dbReference type="EMBL" id="CP000441">
    <property type="protein sequence ID" value="ABI90469.1"/>
    <property type="molecule type" value="Genomic_DNA"/>
</dbReference>
<dbReference type="RefSeq" id="WP_011659860.1">
    <property type="nucleotide sequence ID" value="NC_008391.1"/>
</dbReference>
<dbReference type="SMR" id="Q0B5V4"/>
<dbReference type="GeneID" id="93087868"/>
<dbReference type="KEGG" id="bam:Bamb_4920"/>
<dbReference type="PATRIC" id="fig|339670.21.peg.5291"/>
<dbReference type="eggNOG" id="COG1129">
    <property type="taxonomic scope" value="Bacteria"/>
</dbReference>
<dbReference type="Proteomes" id="UP000000662">
    <property type="component" value="Chromosome 2"/>
</dbReference>
<dbReference type="GO" id="GO:0005886">
    <property type="term" value="C:plasma membrane"/>
    <property type="evidence" value="ECO:0007669"/>
    <property type="project" value="UniProtKB-SubCell"/>
</dbReference>
<dbReference type="GO" id="GO:0015612">
    <property type="term" value="F:ABC-type L-arabinose transporter activity"/>
    <property type="evidence" value="ECO:0007669"/>
    <property type="project" value="UniProtKB-EC"/>
</dbReference>
<dbReference type="GO" id="GO:0005524">
    <property type="term" value="F:ATP binding"/>
    <property type="evidence" value="ECO:0007669"/>
    <property type="project" value="UniProtKB-KW"/>
</dbReference>
<dbReference type="GO" id="GO:0016887">
    <property type="term" value="F:ATP hydrolysis activity"/>
    <property type="evidence" value="ECO:0007669"/>
    <property type="project" value="InterPro"/>
</dbReference>
<dbReference type="CDD" id="cd03216">
    <property type="entry name" value="ABC_Carb_Monos_I"/>
    <property type="match status" value="1"/>
</dbReference>
<dbReference type="CDD" id="cd03215">
    <property type="entry name" value="ABC_Carb_Monos_II"/>
    <property type="match status" value="1"/>
</dbReference>
<dbReference type="FunFam" id="3.40.50.300:FF:000126">
    <property type="entry name" value="Galactose/methyl galactoside import ATP-binding protein MglA"/>
    <property type="match status" value="1"/>
</dbReference>
<dbReference type="FunFam" id="3.40.50.300:FF:000127">
    <property type="entry name" value="Ribose import ATP-binding protein RbsA"/>
    <property type="match status" value="1"/>
</dbReference>
<dbReference type="Gene3D" id="3.40.50.300">
    <property type="entry name" value="P-loop containing nucleotide triphosphate hydrolases"/>
    <property type="match status" value="2"/>
</dbReference>
<dbReference type="InterPro" id="IPR003593">
    <property type="entry name" value="AAA+_ATPase"/>
</dbReference>
<dbReference type="InterPro" id="IPR050107">
    <property type="entry name" value="ABC_carbohydrate_import_ATPase"/>
</dbReference>
<dbReference type="InterPro" id="IPR003439">
    <property type="entry name" value="ABC_transporter-like_ATP-bd"/>
</dbReference>
<dbReference type="InterPro" id="IPR017871">
    <property type="entry name" value="ABC_transporter-like_CS"/>
</dbReference>
<dbReference type="InterPro" id="IPR027417">
    <property type="entry name" value="P-loop_NTPase"/>
</dbReference>
<dbReference type="NCBIfam" id="NF008442">
    <property type="entry name" value="PRK11288.1"/>
    <property type="match status" value="1"/>
</dbReference>
<dbReference type="PANTHER" id="PTHR43790:SF6">
    <property type="entry name" value="ARABINOSE IMPORT ATP-BINDING PROTEIN ARAG"/>
    <property type="match status" value="1"/>
</dbReference>
<dbReference type="PANTHER" id="PTHR43790">
    <property type="entry name" value="CARBOHYDRATE TRANSPORT ATP-BINDING PROTEIN MG119-RELATED"/>
    <property type="match status" value="1"/>
</dbReference>
<dbReference type="Pfam" id="PF00005">
    <property type="entry name" value="ABC_tran"/>
    <property type="match status" value="2"/>
</dbReference>
<dbReference type="SMART" id="SM00382">
    <property type="entry name" value="AAA"/>
    <property type="match status" value="2"/>
</dbReference>
<dbReference type="SUPFAM" id="SSF52540">
    <property type="entry name" value="P-loop containing nucleoside triphosphate hydrolases"/>
    <property type="match status" value="2"/>
</dbReference>
<dbReference type="PROSITE" id="PS00211">
    <property type="entry name" value="ABC_TRANSPORTER_1"/>
    <property type="match status" value="1"/>
</dbReference>
<dbReference type="PROSITE" id="PS50893">
    <property type="entry name" value="ABC_TRANSPORTER_2"/>
    <property type="match status" value="2"/>
</dbReference>
<dbReference type="PROSITE" id="PS51268">
    <property type="entry name" value="ARAG"/>
    <property type="match status" value="1"/>
</dbReference>
<organism>
    <name type="scientific">Burkholderia ambifaria (strain ATCC BAA-244 / DSM 16087 / CCUG 44356 / LMG 19182 / AMMD)</name>
    <name type="common">Burkholderia cepacia (strain AMMD)</name>
    <dbReference type="NCBI Taxonomy" id="339670"/>
    <lineage>
        <taxon>Bacteria</taxon>
        <taxon>Pseudomonadati</taxon>
        <taxon>Pseudomonadota</taxon>
        <taxon>Betaproteobacteria</taxon>
        <taxon>Burkholderiales</taxon>
        <taxon>Burkholderiaceae</taxon>
        <taxon>Burkholderia</taxon>
        <taxon>Burkholderia cepacia complex</taxon>
    </lineage>
</organism>
<sequence length="519" mass="55774">MTMQTITAVSGNDDAATHGAAAPPGGALLSLDGITVTFPGVRALDAVSLSVRAGEVHGLMGENGAGKSTLLKVLSGVNQPQAGTLTLNGTVQRFASTRAALEAGIAIIYQELHLVPELTVAENLMLGQLPSRLGVVDERALAVRALDALERLGEHIDPDIPVKYLSIGQRQMIEIGKALMRDARVIAFDEPTSSLSARETTQLFRIIRSLRAEGRAIIYVTHRMEEVDALCDRVTVFRDGRRIETFESVAELDRDQLIGCMVGRSIEDVYGYRPRAAGDVMIEAKGLTGPGLSEPVSFAARRGEIVGFFGLVGAGRSELMKLLYGATRPSGGHVELGGKRVAFSSPRHAVRAGIALCPEDRKQEGIVAIASVADNLNISARRHFSPARVLLDARRERDLAQRYIERLAIKTPDGDTPIGALSGGNQQKVVLARWLAERIDVFLMDEPTRGIDVGARAEIYNLFYELAEAGRTVILVSSDLAEVIGVSDRIIVMKEGRIAGEVAKAQATPDALIKLALPR</sequence>
<feature type="chain" id="PRO_0000277700" description="Arabinose import ATP-binding protein AraG 2">
    <location>
        <begin position="1"/>
        <end position="519"/>
    </location>
</feature>
<feature type="domain" description="ABC transporter 1" evidence="1">
    <location>
        <begin position="29"/>
        <end position="264"/>
    </location>
</feature>
<feature type="domain" description="ABC transporter 2" evidence="1">
    <location>
        <begin position="264"/>
        <end position="515"/>
    </location>
</feature>
<feature type="binding site" evidence="1">
    <location>
        <begin position="61"/>
        <end position="68"/>
    </location>
    <ligand>
        <name>ATP</name>
        <dbReference type="ChEBI" id="CHEBI:30616"/>
    </ligand>
</feature>
<comment type="function">
    <text evidence="1">Part of the ABC transporter complex AraFGH involved in arabinose import. Responsible for energy coupling to the transport system.</text>
</comment>
<comment type="catalytic activity">
    <reaction evidence="1">
        <text>L-arabinose(out) + ATP + H2O = L-arabinose(in) + ADP + phosphate + H(+)</text>
        <dbReference type="Rhea" id="RHEA:30007"/>
        <dbReference type="ChEBI" id="CHEBI:15377"/>
        <dbReference type="ChEBI" id="CHEBI:15378"/>
        <dbReference type="ChEBI" id="CHEBI:17535"/>
        <dbReference type="ChEBI" id="CHEBI:30616"/>
        <dbReference type="ChEBI" id="CHEBI:43474"/>
        <dbReference type="ChEBI" id="CHEBI:456216"/>
        <dbReference type="EC" id="7.5.2.12"/>
    </reaction>
</comment>
<comment type="subunit">
    <text evidence="1">The complex is composed of two ATP-binding proteins (AraG), two transmembrane proteins (AraH) and a solute-binding protein (AraF).</text>
</comment>
<comment type="subcellular location">
    <subcellularLocation>
        <location evidence="1">Cell inner membrane</location>
        <topology evidence="1">Peripheral membrane protein</topology>
    </subcellularLocation>
</comment>
<comment type="similarity">
    <text evidence="1">Belongs to the ABC transporter superfamily. Arabinose importer (TC 3.A.1.2.2) family.</text>
</comment>
<keyword id="KW-0067">ATP-binding</keyword>
<keyword id="KW-0997">Cell inner membrane</keyword>
<keyword id="KW-1003">Cell membrane</keyword>
<keyword id="KW-0472">Membrane</keyword>
<keyword id="KW-0547">Nucleotide-binding</keyword>
<keyword id="KW-0677">Repeat</keyword>
<keyword id="KW-0762">Sugar transport</keyword>
<keyword id="KW-1278">Translocase</keyword>
<keyword id="KW-0813">Transport</keyword>
<evidence type="ECO:0000255" key="1">
    <source>
        <dbReference type="HAMAP-Rule" id="MF_01721"/>
    </source>
</evidence>
<proteinExistence type="inferred from homology"/>
<protein>
    <recommendedName>
        <fullName evidence="1">Arabinose import ATP-binding protein AraG 2</fullName>
        <ecNumber evidence="1">7.5.2.12</ecNumber>
    </recommendedName>
</protein>